<reference key="1">
    <citation type="journal article" date="2006" name="Proc. Natl. Acad. Sci. U.S.A.">
        <title>Burkholderia xenovorans LB400 harbors a multi-replicon, 9.73-Mbp genome shaped for versatility.</title>
        <authorList>
            <person name="Chain P.S.G."/>
            <person name="Denef V.J."/>
            <person name="Konstantinidis K.T."/>
            <person name="Vergez L.M."/>
            <person name="Agullo L."/>
            <person name="Reyes V.L."/>
            <person name="Hauser L."/>
            <person name="Cordova M."/>
            <person name="Gomez L."/>
            <person name="Gonzalez M."/>
            <person name="Land M."/>
            <person name="Lao V."/>
            <person name="Larimer F."/>
            <person name="LiPuma J.J."/>
            <person name="Mahenthiralingam E."/>
            <person name="Malfatti S.A."/>
            <person name="Marx C.J."/>
            <person name="Parnell J.J."/>
            <person name="Ramette A."/>
            <person name="Richardson P."/>
            <person name="Seeger M."/>
            <person name="Smith D."/>
            <person name="Spilker T."/>
            <person name="Sul W.J."/>
            <person name="Tsoi T.V."/>
            <person name="Ulrich L.E."/>
            <person name="Zhulin I.B."/>
            <person name="Tiedje J.M."/>
        </authorList>
    </citation>
    <scope>NUCLEOTIDE SEQUENCE [LARGE SCALE GENOMIC DNA]</scope>
    <source>
        <strain>LB400</strain>
    </source>
</reference>
<protein>
    <recommendedName>
        <fullName evidence="1">Large ribosomal subunit protein bL27</fullName>
    </recommendedName>
    <alternativeName>
        <fullName evidence="3">50S ribosomal protein L27</fullName>
    </alternativeName>
</protein>
<keyword id="KW-1185">Reference proteome</keyword>
<keyword id="KW-0687">Ribonucleoprotein</keyword>
<keyword id="KW-0689">Ribosomal protein</keyword>
<dbReference type="EMBL" id="CP000270">
    <property type="protein sequence ID" value="ABE32425.1"/>
    <property type="molecule type" value="Genomic_DNA"/>
</dbReference>
<dbReference type="RefSeq" id="WP_011489899.1">
    <property type="nucleotide sequence ID" value="NC_007951.1"/>
</dbReference>
<dbReference type="SMR" id="Q13U14"/>
<dbReference type="STRING" id="266265.Bxe_A0508"/>
<dbReference type="KEGG" id="bxb:DR64_2685"/>
<dbReference type="KEGG" id="bxe:Bxe_A0508"/>
<dbReference type="PATRIC" id="fig|266265.5.peg.4108"/>
<dbReference type="eggNOG" id="COG0211">
    <property type="taxonomic scope" value="Bacteria"/>
</dbReference>
<dbReference type="OrthoDB" id="9803474at2"/>
<dbReference type="Proteomes" id="UP000001817">
    <property type="component" value="Chromosome 1"/>
</dbReference>
<dbReference type="GO" id="GO:0022625">
    <property type="term" value="C:cytosolic large ribosomal subunit"/>
    <property type="evidence" value="ECO:0007669"/>
    <property type="project" value="TreeGrafter"/>
</dbReference>
<dbReference type="GO" id="GO:0003735">
    <property type="term" value="F:structural constituent of ribosome"/>
    <property type="evidence" value="ECO:0007669"/>
    <property type="project" value="InterPro"/>
</dbReference>
<dbReference type="GO" id="GO:0006412">
    <property type="term" value="P:translation"/>
    <property type="evidence" value="ECO:0007669"/>
    <property type="project" value="UniProtKB-UniRule"/>
</dbReference>
<dbReference type="FunFam" id="2.40.50.100:FF:000001">
    <property type="entry name" value="50S ribosomal protein L27"/>
    <property type="match status" value="1"/>
</dbReference>
<dbReference type="Gene3D" id="2.40.50.100">
    <property type="match status" value="1"/>
</dbReference>
<dbReference type="HAMAP" id="MF_00539">
    <property type="entry name" value="Ribosomal_bL27"/>
    <property type="match status" value="1"/>
</dbReference>
<dbReference type="InterPro" id="IPR001684">
    <property type="entry name" value="Ribosomal_bL27"/>
</dbReference>
<dbReference type="InterPro" id="IPR018261">
    <property type="entry name" value="Ribosomal_bL27_CS"/>
</dbReference>
<dbReference type="NCBIfam" id="TIGR00062">
    <property type="entry name" value="L27"/>
    <property type="match status" value="1"/>
</dbReference>
<dbReference type="PANTHER" id="PTHR15893:SF0">
    <property type="entry name" value="LARGE RIBOSOMAL SUBUNIT PROTEIN BL27M"/>
    <property type="match status" value="1"/>
</dbReference>
<dbReference type="PANTHER" id="PTHR15893">
    <property type="entry name" value="RIBOSOMAL PROTEIN L27"/>
    <property type="match status" value="1"/>
</dbReference>
<dbReference type="Pfam" id="PF01016">
    <property type="entry name" value="Ribosomal_L27"/>
    <property type="match status" value="1"/>
</dbReference>
<dbReference type="PRINTS" id="PR00063">
    <property type="entry name" value="RIBOSOMALL27"/>
</dbReference>
<dbReference type="SUPFAM" id="SSF110324">
    <property type="entry name" value="Ribosomal L27 protein-like"/>
    <property type="match status" value="1"/>
</dbReference>
<dbReference type="PROSITE" id="PS00831">
    <property type="entry name" value="RIBOSOMAL_L27"/>
    <property type="match status" value="1"/>
</dbReference>
<feature type="chain" id="PRO_1000017438" description="Large ribosomal subunit protein bL27">
    <location>
        <begin position="1"/>
        <end position="87"/>
    </location>
</feature>
<feature type="region of interest" description="Disordered" evidence="2">
    <location>
        <begin position="1"/>
        <end position="21"/>
    </location>
</feature>
<organism>
    <name type="scientific">Paraburkholderia xenovorans (strain LB400)</name>
    <dbReference type="NCBI Taxonomy" id="266265"/>
    <lineage>
        <taxon>Bacteria</taxon>
        <taxon>Pseudomonadati</taxon>
        <taxon>Pseudomonadota</taxon>
        <taxon>Betaproteobacteria</taxon>
        <taxon>Burkholderiales</taxon>
        <taxon>Burkholderiaceae</taxon>
        <taxon>Paraburkholderia</taxon>
    </lineage>
</organism>
<comment type="similarity">
    <text evidence="1">Belongs to the bacterial ribosomal protein bL27 family.</text>
</comment>
<accession>Q13U14</accession>
<name>RL27_PARXL</name>
<evidence type="ECO:0000255" key="1">
    <source>
        <dbReference type="HAMAP-Rule" id="MF_00539"/>
    </source>
</evidence>
<evidence type="ECO:0000256" key="2">
    <source>
        <dbReference type="SAM" id="MobiDB-lite"/>
    </source>
</evidence>
<evidence type="ECO:0000305" key="3"/>
<gene>
    <name evidence="1" type="primary">rpmA</name>
    <name type="ordered locus">Bxeno_A3887</name>
    <name type="ORF">Bxe_A0508</name>
</gene>
<sequence length="87" mass="9122">MAHKKAGGSSRNGRDSESKRLGVKVYGGQAINAGGIIVRQRGTRMHPGENVGMGKDHTLFALTDGHVNFSTKGAAKKHMVNVVPAAV</sequence>
<proteinExistence type="inferred from homology"/>